<sequence>MKRIITGCLLLNFAMAAQAECNISSSIQNIDYGKRSAAMRQVDRGKTTQLADRTITLVMQCDQDAHIRVQLNTANISNNGFGFGPNGSLNLIASDAFSGSNNLDLALASGKNDNPGSTGTASISTSPNNWLVFMQNGQEVVIDSGKSVSLTLTMAPAFKDEGELTDMTDITGNLTVLVEAK</sequence>
<gene>
    <name type="primary">yhcE</name>
    <name type="ordered locus">b4569</name>
    <name type="ORF">b3217</name>
</gene>
<accession>P45421</accession>
<accession>P76674</accession>
<evidence type="ECO:0000305" key="1"/>
<reference key="1">
    <citation type="journal article" date="1997" name="Science">
        <title>The complete genome sequence of Escherichia coli K-12.</title>
        <authorList>
            <person name="Blattner F.R."/>
            <person name="Plunkett G. III"/>
            <person name="Bloch C.A."/>
            <person name="Perna N.T."/>
            <person name="Burland V."/>
            <person name="Riley M."/>
            <person name="Collado-Vides J."/>
            <person name="Glasner J.D."/>
            <person name="Rode C.K."/>
            <person name="Mayhew G.F."/>
            <person name="Gregor J."/>
            <person name="Davis N.W."/>
            <person name="Kirkpatrick H.A."/>
            <person name="Goeden M.A."/>
            <person name="Rose D.J."/>
            <person name="Mau B."/>
            <person name="Shao Y."/>
        </authorList>
    </citation>
    <scope>NUCLEOTIDE SEQUENCE [LARGE SCALE GENOMIC DNA]</scope>
    <source>
        <strain>K12 / MG1655 / ATCC 47076</strain>
    </source>
</reference>
<reference key="2">
    <citation type="unpublished observations" date="1995-04">
        <authorList>
            <person name="Rudd K.E."/>
        </authorList>
    </citation>
    <scope>CONCEPTUAL TRANSLATION</scope>
</reference>
<dbReference type="EMBL" id="U18997">
    <property type="protein sequence ID" value="AAA58019.1"/>
    <property type="status" value="ALT_SEQ"/>
    <property type="molecule type" value="Genomic_DNA"/>
</dbReference>
<dbReference type="EMBL" id="U00096">
    <property type="status" value="NOT_ANNOTATED_CDS"/>
    <property type="molecule type" value="Genomic_DNA"/>
</dbReference>
<dbReference type="PIR" id="C65113">
    <property type="entry name" value="C65113"/>
</dbReference>
<dbReference type="RefSeq" id="WP_000821351.1">
    <property type="nucleotide sequence ID" value="NZ_SSZK01000007.1"/>
</dbReference>
<dbReference type="FunCoup" id="P45421">
    <property type="interactions" value="2"/>
</dbReference>
<dbReference type="EchoBASE" id="EB2662"/>
<dbReference type="InParanoid" id="P45421"/>
<dbReference type="Proteomes" id="UP000000625">
    <property type="component" value="Chromosome"/>
</dbReference>
<proteinExistence type="uncertain"/>
<protein>
    <recommendedName>
        <fullName>Putative uncharacterized protein YhcE</fullName>
    </recommendedName>
</protein>
<comment type="caution">
    <text evidence="1">Could be the product of a pseudogene. The original sequence is truncated by an IS5 element which is inserted between position 123 and 124.</text>
</comment>
<feature type="chain" id="PRO_0000169483" description="Putative uncharacterized protein YhcE">
    <location>
        <begin position="1"/>
        <end position="181"/>
    </location>
</feature>
<organism>
    <name type="scientific">Escherichia coli (strain K12)</name>
    <dbReference type="NCBI Taxonomy" id="83333"/>
    <lineage>
        <taxon>Bacteria</taxon>
        <taxon>Pseudomonadati</taxon>
        <taxon>Pseudomonadota</taxon>
        <taxon>Gammaproteobacteria</taxon>
        <taxon>Enterobacterales</taxon>
        <taxon>Enterobacteriaceae</taxon>
        <taxon>Escherichia</taxon>
    </lineage>
</organism>
<name>YHCE_ECOLI</name>
<keyword id="KW-1185">Reference proteome</keyword>